<protein>
    <recommendedName>
        <fullName evidence="1">Cell division topological specificity factor</fullName>
    </recommendedName>
</protein>
<name>MINE_LARHH</name>
<evidence type="ECO:0000255" key="1">
    <source>
        <dbReference type="HAMAP-Rule" id="MF_00262"/>
    </source>
</evidence>
<organism>
    <name type="scientific">Laribacter hongkongensis (strain HLHK9)</name>
    <dbReference type="NCBI Taxonomy" id="557598"/>
    <lineage>
        <taxon>Bacteria</taxon>
        <taxon>Pseudomonadati</taxon>
        <taxon>Pseudomonadota</taxon>
        <taxon>Betaproteobacteria</taxon>
        <taxon>Neisseriales</taxon>
        <taxon>Aquaspirillaceae</taxon>
        <taxon>Laribacter</taxon>
    </lineage>
</organism>
<dbReference type="EMBL" id="CP001154">
    <property type="protein sequence ID" value="ACO75512.1"/>
    <property type="molecule type" value="Genomic_DNA"/>
</dbReference>
<dbReference type="RefSeq" id="WP_012697998.1">
    <property type="nucleotide sequence ID" value="NC_012559.1"/>
</dbReference>
<dbReference type="SMR" id="C1DBV9"/>
<dbReference type="STRING" id="557598.LHK_02530"/>
<dbReference type="GeneID" id="75110093"/>
<dbReference type="KEGG" id="lhk:LHK_02530"/>
<dbReference type="eggNOG" id="COG0851">
    <property type="taxonomic scope" value="Bacteria"/>
</dbReference>
<dbReference type="HOGENOM" id="CLU_137929_2_1_4"/>
<dbReference type="Proteomes" id="UP000002010">
    <property type="component" value="Chromosome"/>
</dbReference>
<dbReference type="GO" id="GO:0051301">
    <property type="term" value="P:cell division"/>
    <property type="evidence" value="ECO:0007669"/>
    <property type="project" value="UniProtKB-KW"/>
</dbReference>
<dbReference type="GO" id="GO:0032955">
    <property type="term" value="P:regulation of division septum assembly"/>
    <property type="evidence" value="ECO:0007669"/>
    <property type="project" value="InterPro"/>
</dbReference>
<dbReference type="FunFam" id="3.30.1070.10:FF:000001">
    <property type="entry name" value="Cell division topological specificity factor"/>
    <property type="match status" value="1"/>
</dbReference>
<dbReference type="Gene3D" id="3.30.1070.10">
    <property type="entry name" value="Cell division topological specificity factor MinE"/>
    <property type="match status" value="1"/>
</dbReference>
<dbReference type="HAMAP" id="MF_00262">
    <property type="entry name" value="MinE"/>
    <property type="match status" value="1"/>
</dbReference>
<dbReference type="InterPro" id="IPR005527">
    <property type="entry name" value="MinE"/>
</dbReference>
<dbReference type="InterPro" id="IPR036707">
    <property type="entry name" value="MinE_sf"/>
</dbReference>
<dbReference type="NCBIfam" id="TIGR01215">
    <property type="entry name" value="minE"/>
    <property type="match status" value="1"/>
</dbReference>
<dbReference type="NCBIfam" id="NF001422">
    <property type="entry name" value="PRK00296.1"/>
    <property type="match status" value="1"/>
</dbReference>
<dbReference type="NCBIfam" id="NF010595">
    <property type="entry name" value="PRK13989.1"/>
    <property type="match status" value="1"/>
</dbReference>
<dbReference type="Pfam" id="PF03776">
    <property type="entry name" value="MinE"/>
    <property type="match status" value="1"/>
</dbReference>
<dbReference type="SUPFAM" id="SSF55229">
    <property type="entry name" value="Cell division protein MinE topological specificity domain"/>
    <property type="match status" value="1"/>
</dbReference>
<gene>
    <name evidence="1" type="primary">minE</name>
    <name type="ordered locus">LHK_02530</name>
</gene>
<accession>C1DBV9</accession>
<feature type="chain" id="PRO_1000191287" description="Cell division topological specificity factor">
    <location>
        <begin position="1"/>
        <end position="89"/>
    </location>
</feature>
<keyword id="KW-0131">Cell cycle</keyword>
<keyword id="KW-0132">Cell division</keyword>
<keyword id="KW-1185">Reference proteome</keyword>
<proteinExistence type="inferred from homology"/>
<reference key="1">
    <citation type="journal article" date="2009" name="PLoS Genet.">
        <title>The complete genome and proteome of Laribacter hongkongensis reveal potential mechanisms for adaptations to different temperatures and habitats.</title>
        <authorList>
            <person name="Woo P.C.Y."/>
            <person name="Lau S.K.P."/>
            <person name="Tse H."/>
            <person name="Teng J.L.L."/>
            <person name="Curreem S.O."/>
            <person name="Tsang A.K.L."/>
            <person name="Fan R.Y.Y."/>
            <person name="Wong G.K.M."/>
            <person name="Huang Y."/>
            <person name="Loman N.J."/>
            <person name="Snyder L.A.S."/>
            <person name="Cai J.J."/>
            <person name="Huang J.-D."/>
            <person name="Mak W."/>
            <person name="Pallen M.J."/>
            <person name="Lok S."/>
            <person name="Yuen K.-Y."/>
        </authorList>
    </citation>
    <scope>NUCLEOTIDE SEQUENCE [LARGE SCALE GENOMIC DNA]</scope>
    <source>
        <strain>HLHK9</strain>
    </source>
</reference>
<comment type="function">
    <text evidence="1">Prevents the cell division inhibition by proteins MinC and MinD at internal division sites while permitting inhibition at polar sites. This ensures cell division at the proper site by restricting the formation of a division septum at the midpoint of the long axis of the cell.</text>
</comment>
<comment type="similarity">
    <text evidence="1">Belongs to the MinE family.</text>
</comment>
<sequence>MSLIEKLFGKRQKTASIARERLQIILAHERNGRAEPDYLPQLQQELIAVISKYVKIAPEDIKVQLERQDDLEVLEVNIVLPEPQQRTVA</sequence>